<protein>
    <recommendedName>
        <fullName evidence="1">UDP-N-acetyl-D-mannosaminuronic acid transferase</fullName>
        <shortName evidence="1">UDP-ManNAcA transferase</shortName>
        <ecNumber evidence="1">2.4.1.180</ecNumber>
    </recommendedName>
</protein>
<sequence length="246" mass="27524">MTNNAAAPLYSLRGLPLIGWRDMPHALNYLFADGQLKQGTLVAINAEKLLTAEDNPDVRALIAAAEFKYADGISVVRSIRKKFPQAQVSRVAGADLWEALMARAGKEGTPVFLIGGKPEVLAQTEEKLRAQWNVNIVGSQDGYFTPEQSQALFARIHASGAQIVTVAMGSPKQEIVMHDCREVHPHALYMGVGGTYDVFTGHVKRAPKIWQNLGLEWLYRLLSQPSRITRQMRLLRYLRWHYTDDL</sequence>
<accession>A9MJ15</accession>
<comment type="function">
    <text evidence="1">Catalyzes the synthesis of Und-PP-GlcNAc-ManNAcA (Lipid II), the second lipid-linked intermediate involved in enterobacterial common antigen (ECA) synthesis.</text>
</comment>
<comment type="catalytic activity">
    <reaction evidence="1">
        <text>UDP-N-acetyl-alpha-D-mannosaminouronate + N-acetyl-alpha-D-glucosaminyl-di-trans,octa-cis-undecaprenyl diphosphate = beta-D-ManNAcA-(1-&gt;4)-alpha-D-GlcNAc-di-trans,octa-cis-undecaprenyl diphosphate + UDP + H(+)</text>
        <dbReference type="Rhea" id="RHEA:28366"/>
        <dbReference type="ChEBI" id="CHEBI:15378"/>
        <dbReference type="ChEBI" id="CHEBI:58223"/>
        <dbReference type="ChEBI" id="CHEBI:61495"/>
        <dbReference type="ChEBI" id="CHEBI:62959"/>
        <dbReference type="ChEBI" id="CHEBI:70731"/>
        <dbReference type="EC" id="2.4.1.180"/>
    </reaction>
</comment>
<comment type="pathway">
    <text evidence="1">Bacterial outer membrane biogenesis; enterobacterial common antigen biosynthesis.</text>
</comment>
<comment type="similarity">
    <text evidence="1">Belongs to the glycosyltransferase 26 family.</text>
</comment>
<keyword id="KW-0328">Glycosyltransferase</keyword>
<keyword id="KW-1185">Reference proteome</keyword>
<keyword id="KW-0808">Transferase</keyword>
<proteinExistence type="inferred from homology"/>
<feature type="chain" id="PRO_1000083947" description="UDP-N-acetyl-D-mannosaminuronic acid transferase">
    <location>
        <begin position="1"/>
        <end position="246"/>
    </location>
</feature>
<evidence type="ECO:0000255" key="1">
    <source>
        <dbReference type="HAMAP-Rule" id="MF_01001"/>
    </source>
</evidence>
<name>WECG_SALAR</name>
<organism>
    <name type="scientific">Salmonella arizonae (strain ATCC BAA-731 / CDC346-86 / RSK2980)</name>
    <dbReference type="NCBI Taxonomy" id="41514"/>
    <lineage>
        <taxon>Bacteria</taxon>
        <taxon>Pseudomonadati</taxon>
        <taxon>Pseudomonadota</taxon>
        <taxon>Gammaproteobacteria</taxon>
        <taxon>Enterobacterales</taxon>
        <taxon>Enterobacteriaceae</taxon>
        <taxon>Salmonella</taxon>
    </lineage>
</organism>
<reference key="1">
    <citation type="submission" date="2007-11" db="EMBL/GenBank/DDBJ databases">
        <authorList>
            <consortium name="The Salmonella enterica serovar Arizonae Genome Sequencing Project"/>
            <person name="McClelland M."/>
            <person name="Sanderson E.K."/>
            <person name="Porwollik S."/>
            <person name="Spieth J."/>
            <person name="Clifton W.S."/>
            <person name="Fulton R."/>
            <person name="Chunyan W."/>
            <person name="Wollam A."/>
            <person name="Shah N."/>
            <person name="Pepin K."/>
            <person name="Bhonagiri V."/>
            <person name="Nash W."/>
            <person name="Johnson M."/>
            <person name="Thiruvilangam P."/>
            <person name="Wilson R."/>
        </authorList>
    </citation>
    <scope>NUCLEOTIDE SEQUENCE [LARGE SCALE GENOMIC DNA]</scope>
    <source>
        <strain>ATCC BAA-731 / CDC346-86 / RSK2980</strain>
    </source>
</reference>
<gene>
    <name evidence="1" type="primary">wecG</name>
    <name evidence="1" type="synonym">rffM</name>
    <name type="ordered locus">SARI_03724</name>
</gene>
<dbReference type="EC" id="2.4.1.180" evidence="1"/>
<dbReference type="EMBL" id="CP000880">
    <property type="protein sequence ID" value="ABX23524.1"/>
    <property type="molecule type" value="Genomic_DNA"/>
</dbReference>
<dbReference type="SMR" id="A9MJ15"/>
<dbReference type="STRING" id="41514.SARI_03724"/>
<dbReference type="CAZy" id="GT26">
    <property type="family name" value="Glycosyltransferase Family 26"/>
</dbReference>
<dbReference type="KEGG" id="ses:SARI_03724"/>
<dbReference type="HOGENOM" id="CLU_063203_3_2_6"/>
<dbReference type="UniPathway" id="UPA00566"/>
<dbReference type="Proteomes" id="UP000002084">
    <property type="component" value="Chromosome"/>
</dbReference>
<dbReference type="GO" id="GO:0047241">
    <property type="term" value="F:lipopolysaccharide N-acetylmannosaminouronosyltransferase activity"/>
    <property type="evidence" value="ECO:0007669"/>
    <property type="project" value="UniProtKB-UniRule"/>
</dbReference>
<dbReference type="GO" id="GO:0009246">
    <property type="term" value="P:enterobacterial common antigen biosynthetic process"/>
    <property type="evidence" value="ECO:0007669"/>
    <property type="project" value="UniProtKB-UniRule"/>
</dbReference>
<dbReference type="CDD" id="cd06533">
    <property type="entry name" value="Glyco_transf_WecG_TagA"/>
    <property type="match status" value="1"/>
</dbReference>
<dbReference type="HAMAP" id="MF_01001">
    <property type="entry name" value="WecG_RffM"/>
    <property type="match status" value="1"/>
</dbReference>
<dbReference type="InterPro" id="IPR023085">
    <property type="entry name" value="UDP-ManNAcA_Trfase_WecG"/>
</dbReference>
<dbReference type="InterPro" id="IPR004629">
    <property type="entry name" value="WecG_TagA_CpsF"/>
</dbReference>
<dbReference type="NCBIfam" id="NF002980">
    <property type="entry name" value="PRK03692.1"/>
    <property type="match status" value="1"/>
</dbReference>
<dbReference type="NCBIfam" id="TIGR00696">
    <property type="entry name" value="wecG_tagA_cpsF"/>
    <property type="match status" value="1"/>
</dbReference>
<dbReference type="PANTHER" id="PTHR34136">
    <property type="match status" value="1"/>
</dbReference>
<dbReference type="PANTHER" id="PTHR34136:SF1">
    <property type="entry name" value="UDP-N-ACETYL-D-MANNOSAMINURONIC ACID TRANSFERASE"/>
    <property type="match status" value="1"/>
</dbReference>
<dbReference type="Pfam" id="PF03808">
    <property type="entry name" value="Glyco_tran_WecG"/>
    <property type="match status" value="1"/>
</dbReference>